<comment type="function">
    <text evidence="1">May function in the epidermal growth factor receptor/EGFR signaling pathway.</text>
</comment>
<comment type="subcellular location">
    <subcellularLocation>
        <location evidence="1">Cytoplasm</location>
    </subcellularLocation>
</comment>
<comment type="similarity">
    <text evidence="3">Belongs to the FAM83 family.</text>
</comment>
<reference key="1">
    <citation type="submission" date="2004-08" db="EMBL/GenBank/DDBJ databases">
        <authorList>
            <consortium name="NIH - Xenopus Gene Collection (XGC) project"/>
        </authorList>
    </citation>
    <scope>NUCLEOTIDE SEQUENCE [LARGE SCALE MRNA]</scope>
    <source>
        <tissue>Embryo</tissue>
    </source>
</reference>
<protein>
    <recommendedName>
        <fullName evidence="3">Protein FAM83A</fullName>
    </recommendedName>
</protein>
<gene>
    <name evidence="1" type="primary">fam83a</name>
</gene>
<feature type="chain" id="PRO_0000286816" description="Protein FAM83A">
    <location>
        <begin position="1"/>
        <end position="441"/>
    </location>
</feature>
<feature type="region of interest" description="Disordered" evidence="2">
    <location>
        <begin position="81"/>
        <end position="108"/>
    </location>
</feature>
<feature type="region of interest" description="Disordered" evidence="2">
    <location>
        <begin position="312"/>
        <end position="368"/>
    </location>
</feature>
<feature type="compositionally biased region" description="Polar residues" evidence="2">
    <location>
        <begin position="314"/>
        <end position="327"/>
    </location>
</feature>
<feature type="compositionally biased region" description="Low complexity" evidence="2">
    <location>
        <begin position="328"/>
        <end position="354"/>
    </location>
</feature>
<keyword id="KW-0963">Cytoplasm</keyword>
<keyword id="KW-1185">Reference proteome</keyword>
<accession>Q66JF7</accession>
<name>FA83A_XENTR</name>
<sequence length="441" mass="50081">MNKSKTFGKIKKRIEEAKNKWARLSKADYSYNESARLATDALLDGGVEDYQKVLSEEGEVDLLSGDELQYILKNIKAPLYSNDNQTEGENGSAANGNKSESYYPMNSDSEPVPTLHNWSAEEKPYLKDKSSATVYFQADKTNNVRETIRRCINKTTQALAILMDEFTDAEIFCDVLEAANKRNIFVYLLLDANKLHLFIQMCEKLQVRDLHMTNISVRSVTGDVYCAKSGKKFAGQINEKFIISDWRFVLSGTYSFTWLSGQVHRNFLYKFSGDVVELFDEEFRNLYASSKPVMGLKSPAPMAPVLRREDSGMSIMSDSNPESINTTSEPFSSISTASISNDSQRPKSPVSTTPVPSPPSSPVKSPLQRVNSFHGYSSLISPPPQINYQSNYYQRNYAPDPPSFFYNNNANFYRSFRMRQEDFSMPRFNQGWRLFSRATMT</sequence>
<evidence type="ECO:0000250" key="1">
    <source>
        <dbReference type="UniProtKB" id="Q86UY5"/>
    </source>
</evidence>
<evidence type="ECO:0000256" key="2">
    <source>
        <dbReference type="SAM" id="MobiDB-lite"/>
    </source>
</evidence>
<evidence type="ECO:0000305" key="3"/>
<proteinExistence type="evidence at transcript level"/>
<organism>
    <name type="scientific">Xenopus tropicalis</name>
    <name type="common">Western clawed frog</name>
    <name type="synonym">Silurana tropicalis</name>
    <dbReference type="NCBI Taxonomy" id="8364"/>
    <lineage>
        <taxon>Eukaryota</taxon>
        <taxon>Metazoa</taxon>
        <taxon>Chordata</taxon>
        <taxon>Craniata</taxon>
        <taxon>Vertebrata</taxon>
        <taxon>Euteleostomi</taxon>
        <taxon>Amphibia</taxon>
        <taxon>Batrachia</taxon>
        <taxon>Anura</taxon>
        <taxon>Pipoidea</taxon>
        <taxon>Pipidae</taxon>
        <taxon>Xenopodinae</taxon>
        <taxon>Xenopus</taxon>
        <taxon>Silurana</taxon>
    </lineage>
</organism>
<dbReference type="EMBL" id="BC080932">
    <property type="protein sequence ID" value="AAH80932.1"/>
    <property type="molecule type" value="mRNA"/>
</dbReference>
<dbReference type="RefSeq" id="NP_001008047.1">
    <property type="nucleotide sequence ID" value="NM_001008046.1"/>
</dbReference>
<dbReference type="SMR" id="Q66JF7"/>
<dbReference type="FunCoup" id="Q66JF7">
    <property type="interactions" value="180"/>
</dbReference>
<dbReference type="STRING" id="8364.ENSXETP00000029754"/>
<dbReference type="PaxDb" id="8364-ENSXETP00000050140"/>
<dbReference type="DNASU" id="493409"/>
<dbReference type="GeneID" id="493409"/>
<dbReference type="KEGG" id="xtr:493409"/>
<dbReference type="AGR" id="Xenbase:XB-GENE-947619"/>
<dbReference type="CTD" id="84985"/>
<dbReference type="Xenbase" id="XB-GENE-947619">
    <property type="gene designation" value="fam83a"/>
</dbReference>
<dbReference type="eggNOG" id="ENOG502QQDU">
    <property type="taxonomic scope" value="Eukaryota"/>
</dbReference>
<dbReference type="InParanoid" id="Q66JF7"/>
<dbReference type="OMA" id="YSFSWLC"/>
<dbReference type="OrthoDB" id="9905385at2759"/>
<dbReference type="Reactome" id="R-XTR-177929">
    <property type="pathway name" value="Signaling by EGFR"/>
</dbReference>
<dbReference type="Proteomes" id="UP000008143">
    <property type="component" value="Chromosome 6"/>
</dbReference>
<dbReference type="Bgee" id="ENSXETG00000023191">
    <property type="expression patterns" value="Expressed in skin of body and 4 other cell types or tissues"/>
</dbReference>
<dbReference type="GO" id="GO:0005737">
    <property type="term" value="C:cytoplasm"/>
    <property type="evidence" value="ECO:0007669"/>
    <property type="project" value="UniProtKB-SubCell"/>
</dbReference>
<dbReference type="GO" id="GO:0008283">
    <property type="term" value="P:cell population proliferation"/>
    <property type="evidence" value="ECO:0000250"/>
    <property type="project" value="UniProtKB"/>
</dbReference>
<dbReference type="GO" id="GO:0007173">
    <property type="term" value="P:epidermal growth factor receptor signaling pathway"/>
    <property type="evidence" value="ECO:0000250"/>
    <property type="project" value="UniProtKB"/>
</dbReference>
<dbReference type="CDD" id="cd09181">
    <property type="entry name" value="PLDc_FAM83A_N"/>
    <property type="match status" value="1"/>
</dbReference>
<dbReference type="FunFam" id="3.30.870.10:FF:000004">
    <property type="entry name" value="protein FAM83H isoform X2"/>
    <property type="match status" value="1"/>
</dbReference>
<dbReference type="Gene3D" id="3.30.870.10">
    <property type="entry name" value="Endonuclease Chain A"/>
    <property type="match status" value="1"/>
</dbReference>
<dbReference type="InterPro" id="IPR050944">
    <property type="entry name" value="FAM83"/>
</dbReference>
<dbReference type="InterPro" id="IPR012461">
    <property type="entry name" value="SACK1"/>
</dbReference>
<dbReference type="PANTHER" id="PTHR16181">
    <property type="entry name" value="PROTEIN FAM83A-RELATED"/>
    <property type="match status" value="1"/>
</dbReference>
<dbReference type="PANTHER" id="PTHR16181:SF29">
    <property type="entry name" value="PROTEIN FAM83A-RELATED"/>
    <property type="match status" value="1"/>
</dbReference>
<dbReference type="Pfam" id="PF07894">
    <property type="entry name" value="SACK1"/>
    <property type="match status" value="1"/>
</dbReference>
<dbReference type="SUPFAM" id="SSF56024">
    <property type="entry name" value="Phospholipase D/nuclease"/>
    <property type="match status" value="1"/>
</dbReference>